<keyword id="KW-0032">Aminotransferase</keyword>
<keyword id="KW-0093">Biotin biosynthesis</keyword>
<keyword id="KW-0963">Cytoplasm</keyword>
<keyword id="KW-0663">Pyridoxal phosphate</keyword>
<keyword id="KW-1185">Reference proteome</keyword>
<keyword id="KW-0949">S-adenosyl-L-methionine</keyword>
<keyword id="KW-0808">Transferase</keyword>
<reference key="1">
    <citation type="journal article" date="2000" name="Nature">
        <title>Genome sequence of the endocellular bacterial symbiont of aphids Buchnera sp. APS.</title>
        <authorList>
            <person name="Shigenobu S."/>
            <person name="Watanabe H."/>
            <person name="Hattori M."/>
            <person name="Sakaki Y."/>
            <person name="Ishikawa H."/>
        </authorList>
    </citation>
    <scope>NUCLEOTIDE SEQUENCE [LARGE SCALE GENOMIC DNA]</scope>
    <source>
        <strain>APS</strain>
    </source>
</reference>
<evidence type="ECO:0000255" key="1">
    <source>
        <dbReference type="HAMAP-Rule" id="MF_00834"/>
    </source>
</evidence>
<protein>
    <recommendedName>
        <fullName evidence="1">Adenosylmethionine-8-amino-7-oxononanoate aminotransferase</fullName>
        <ecNumber evidence="1">2.6.1.62</ecNumber>
    </recommendedName>
    <alternativeName>
        <fullName evidence="1">7,8-diamino-pelargonic acid aminotransferase</fullName>
        <shortName evidence="1">DAPA AT</shortName>
        <shortName evidence="1">DAPA aminotransferase</shortName>
    </alternativeName>
    <alternativeName>
        <fullName evidence="1">7,8-diaminononanoate synthase</fullName>
        <shortName evidence="1">DANS</shortName>
    </alternativeName>
    <alternativeName>
        <fullName evidence="1">Diaminopelargonic acid synthase</fullName>
    </alternativeName>
</protein>
<accession>P57379</accession>
<name>BIOA_BUCAI</name>
<feature type="chain" id="PRO_0000120362" description="Adenosylmethionine-8-amino-7-oxononanoate aminotransferase">
    <location>
        <begin position="1"/>
        <end position="428"/>
    </location>
</feature>
<feature type="binding site" evidence="1">
    <location>
        <position position="52"/>
    </location>
    <ligand>
        <name>substrate</name>
    </ligand>
</feature>
<feature type="binding site" evidence="1">
    <location>
        <begin position="112"/>
        <end position="113"/>
    </location>
    <ligand>
        <name>pyridoxal 5'-phosphate</name>
        <dbReference type="ChEBI" id="CHEBI:597326"/>
    </ligand>
</feature>
<feature type="binding site" evidence="1">
    <location>
        <position position="144"/>
    </location>
    <ligand>
        <name>substrate</name>
    </ligand>
</feature>
<feature type="binding site" evidence="1">
    <location>
        <position position="245"/>
    </location>
    <ligand>
        <name>pyridoxal 5'-phosphate</name>
        <dbReference type="ChEBI" id="CHEBI:597326"/>
    </ligand>
</feature>
<feature type="binding site" evidence="1">
    <location>
        <position position="274"/>
    </location>
    <ligand>
        <name>substrate</name>
    </ligand>
</feature>
<feature type="binding site" evidence="1">
    <location>
        <position position="307"/>
    </location>
    <ligand>
        <name>substrate</name>
    </ligand>
</feature>
<feature type="binding site" evidence="1">
    <location>
        <begin position="308"/>
        <end position="309"/>
    </location>
    <ligand>
        <name>pyridoxal 5'-phosphate</name>
        <dbReference type="ChEBI" id="CHEBI:597326"/>
    </ligand>
</feature>
<feature type="binding site" evidence="1">
    <location>
        <position position="391"/>
    </location>
    <ligand>
        <name>substrate</name>
    </ligand>
</feature>
<feature type="site" description="Participates in the substrate recognition with KAPA and in a stacking interaction with the adenine ring of SAM" evidence="1">
    <location>
        <position position="17"/>
    </location>
</feature>
<feature type="modified residue" description="N6-(pyridoxal phosphate)lysine" evidence="1">
    <location>
        <position position="274"/>
    </location>
</feature>
<organism>
    <name type="scientific">Buchnera aphidicola subsp. Acyrthosiphon pisum (strain APS)</name>
    <name type="common">Acyrthosiphon pisum symbiotic bacterium</name>
    <dbReference type="NCBI Taxonomy" id="107806"/>
    <lineage>
        <taxon>Bacteria</taxon>
        <taxon>Pseudomonadati</taxon>
        <taxon>Pseudomonadota</taxon>
        <taxon>Gammaproteobacteria</taxon>
        <taxon>Enterobacterales</taxon>
        <taxon>Erwiniaceae</taxon>
        <taxon>Buchnera</taxon>
    </lineage>
</organism>
<proteinExistence type="inferred from homology"/>
<sequence length="428" mass="48305">MSQSDTIFDYKHIWHPYSSMNNPHPCYTVISAKGVYLKLKNRKYMIDGMSSWWAAIHGYNHPVLNKALKKQIRKMSHVMFGGITHPPAISLCRKLISLTPEKLDCVFLSDSGSVAIEVAIKMLIQYWQALGQKRKLFLTIRNGYHGDTFSAMSVSDPKNSFHQIYHNLLPKHLFADAPVSSFYKNWDNEDILSFKKIIEKNSFKIAGVILEPIVQGVGGMNFYHPMYLKQIKILCNHYSIPVIFDEIATGFGRTGKMFAFEHANVVPDILCLGKSITGGTITLAATLTSRHIADTISKGKVGCFMHGPTYMGNPLACAVANANIKILKTNQWKIQVLNIEKQLFKSLMPLINHPYVTDVRVLGAIGVVECSRSINMISIQKFFVENGVWIRPFKKLIYIVPPYIISPHTLKKLTNVISNALNKTELFI</sequence>
<dbReference type="EC" id="2.6.1.62" evidence="1"/>
<dbReference type="EMBL" id="BA000003">
    <property type="protein sequence ID" value="BAB13002.1"/>
    <property type="molecule type" value="Genomic_DNA"/>
</dbReference>
<dbReference type="RefSeq" id="NP_240116.1">
    <property type="nucleotide sequence ID" value="NC_002528.1"/>
</dbReference>
<dbReference type="RefSeq" id="WP_009874246.1">
    <property type="nucleotide sequence ID" value="NC_002528.1"/>
</dbReference>
<dbReference type="SMR" id="P57379"/>
<dbReference type="STRING" id="563178.BUAP5A_287"/>
<dbReference type="EnsemblBacteria" id="BAB13002">
    <property type="protein sequence ID" value="BAB13002"/>
    <property type="gene ID" value="BAB13002"/>
</dbReference>
<dbReference type="KEGG" id="buc:BU292"/>
<dbReference type="PATRIC" id="fig|107806.10.peg.302"/>
<dbReference type="eggNOG" id="COG0161">
    <property type="taxonomic scope" value="Bacteria"/>
</dbReference>
<dbReference type="HOGENOM" id="CLU_016922_4_3_6"/>
<dbReference type="UniPathway" id="UPA00078">
    <property type="reaction ID" value="UER00160"/>
</dbReference>
<dbReference type="Proteomes" id="UP000001806">
    <property type="component" value="Chromosome"/>
</dbReference>
<dbReference type="GO" id="GO:0005737">
    <property type="term" value="C:cytoplasm"/>
    <property type="evidence" value="ECO:0007669"/>
    <property type="project" value="UniProtKB-SubCell"/>
</dbReference>
<dbReference type="GO" id="GO:0004015">
    <property type="term" value="F:adenosylmethionine-8-amino-7-oxononanoate transaminase activity"/>
    <property type="evidence" value="ECO:0007669"/>
    <property type="project" value="UniProtKB-UniRule"/>
</dbReference>
<dbReference type="GO" id="GO:0030170">
    <property type="term" value="F:pyridoxal phosphate binding"/>
    <property type="evidence" value="ECO:0007669"/>
    <property type="project" value="UniProtKB-UniRule"/>
</dbReference>
<dbReference type="GO" id="GO:0009102">
    <property type="term" value="P:biotin biosynthetic process"/>
    <property type="evidence" value="ECO:0007669"/>
    <property type="project" value="UniProtKB-UniRule"/>
</dbReference>
<dbReference type="CDD" id="cd00610">
    <property type="entry name" value="OAT_like"/>
    <property type="match status" value="1"/>
</dbReference>
<dbReference type="FunFam" id="3.40.640.10:FF:000041">
    <property type="entry name" value="Adenosylmethionine-8-amino-7-oxononanoate aminotransferase"/>
    <property type="match status" value="1"/>
</dbReference>
<dbReference type="Gene3D" id="3.90.1150.10">
    <property type="entry name" value="Aspartate Aminotransferase, domain 1"/>
    <property type="match status" value="1"/>
</dbReference>
<dbReference type="Gene3D" id="3.40.640.10">
    <property type="entry name" value="Type I PLP-dependent aspartate aminotransferase-like (Major domain)"/>
    <property type="match status" value="1"/>
</dbReference>
<dbReference type="HAMAP" id="MF_00834">
    <property type="entry name" value="BioA"/>
    <property type="match status" value="1"/>
</dbReference>
<dbReference type="InterPro" id="IPR005814">
    <property type="entry name" value="Aminotrans_3"/>
</dbReference>
<dbReference type="InterPro" id="IPR049704">
    <property type="entry name" value="Aminotrans_3_PPA_site"/>
</dbReference>
<dbReference type="InterPro" id="IPR005815">
    <property type="entry name" value="BioA"/>
</dbReference>
<dbReference type="InterPro" id="IPR015424">
    <property type="entry name" value="PyrdxlP-dep_Trfase"/>
</dbReference>
<dbReference type="InterPro" id="IPR015421">
    <property type="entry name" value="PyrdxlP-dep_Trfase_major"/>
</dbReference>
<dbReference type="InterPro" id="IPR015422">
    <property type="entry name" value="PyrdxlP-dep_Trfase_small"/>
</dbReference>
<dbReference type="NCBIfam" id="TIGR00508">
    <property type="entry name" value="bioA"/>
    <property type="match status" value="1"/>
</dbReference>
<dbReference type="NCBIfam" id="NF004624">
    <property type="entry name" value="PRK05964.1"/>
    <property type="match status" value="1"/>
</dbReference>
<dbReference type="NCBIfam" id="NF005940">
    <property type="entry name" value="PRK07986.1"/>
    <property type="match status" value="1"/>
</dbReference>
<dbReference type="PANTHER" id="PTHR42684">
    <property type="entry name" value="ADENOSYLMETHIONINE-8-AMINO-7-OXONONANOATE AMINOTRANSFERASE"/>
    <property type="match status" value="1"/>
</dbReference>
<dbReference type="PANTHER" id="PTHR42684:SF17">
    <property type="entry name" value="ADENOSYLMETHIONINE-8-AMINO-7-OXONONANOATE AMINOTRANSFERASE"/>
    <property type="match status" value="1"/>
</dbReference>
<dbReference type="Pfam" id="PF00202">
    <property type="entry name" value="Aminotran_3"/>
    <property type="match status" value="1"/>
</dbReference>
<dbReference type="SUPFAM" id="SSF53383">
    <property type="entry name" value="PLP-dependent transferases"/>
    <property type="match status" value="1"/>
</dbReference>
<dbReference type="PROSITE" id="PS00600">
    <property type="entry name" value="AA_TRANSFER_CLASS_3"/>
    <property type="match status" value="1"/>
</dbReference>
<comment type="function">
    <text evidence="1">Catalyzes the transfer of the alpha-amino group from S-adenosyl-L-methionine (SAM) to 7-keto-8-aminopelargonic acid (KAPA) to form 7,8-diaminopelargonic acid (DAPA). It is the only aminotransferase known to utilize SAM as an amino donor.</text>
</comment>
<comment type="catalytic activity">
    <reaction evidence="1">
        <text>(8S)-8-amino-7-oxononanoate + S-adenosyl-L-methionine = S-adenosyl-4-methylsulfanyl-2-oxobutanoate + (7R,8S)-7,8-diammoniononanoate</text>
        <dbReference type="Rhea" id="RHEA:16861"/>
        <dbReference type="ChEBI" id="CHEBI:16490"/>
        <dbReference type="ChEBI" id="CHEBI:59789"/>
        <dbReference type="ChEBI" id="CHEBI:149468"/>
        <dbReference type="ChEBI" id="CHEBI:149469"/>
        <dbReference type="EC" id="2.6.1.62"/>
    </reaction>
</comment>
<comment type="cofactor">
    <cofactor evidence="1">
        <name>pyridoxal 5'-phosphate</name>
        <dbReference type="ChEBI" id="CHEBI:597326"/>
    </cofactor>
</comment>
<comment type="pathway">
    <text evidence="1">Cofactor biosynthesis; biotin biosynthesis; 7,8-diaminononanoate from 8-amino-7-oxononanoate (SAM route): step 1/1.</text>
</comment>
<comment type="subunit">
    <text evidence="1">Homodimer.</text>
</comment>
<comment type="subcellular location">
    <subcellularLocation>
        <location evidence="1">Cytoplasm</location>
    </subcellularLocation>
</comment>
<comment type="similarity">
    <text evidence="1">Belongs to the class-III pyridoxal-phosphate-dependent aminotransferase family. BioA subfamily.</text>
</comment>
<gene>
    <name evidence="1" type="primary">bioA</name>
    <name type="ordered locus">BU292</name>
</gene>